<comment type="function">
    <text evidence="1">ppGpp hydrolyzing enzyme involved in starvation response.</text>
</comment>
<comment type="catalytic activity">
    <reaction>
        <text>guanosine 3',5'-bis(diphosphate) + H2O = GDP + diphosphate + H(+)</text>
        <dbReference type="Rhea" id="RHEA:14253"/>
        <dbReference type="ChEBI" id="CHEBI:15377"/>
        <dbReference type="ChEBI" id="CHEBI:15378"/>
        <dbReference type="ChEBI" id="CHEBI:33019"/>
        <dbReference type="ChEBI" id="CHEBI:58189"/>
        <dbReference type="ChEBI" id="CHEBI:77828"/>
        <dbReference type="EC" id="3.1.7.2"/>
    </reaction>
</comment>
<comment type="cofactor">
    <cofactor evidence="1">
        <name>Mn(2+)</name>
        <dbReference type="ChEBI" id="CHEBI:29035"/>
    </cofactor>
</comment>
<comment type="similarity">
    <text evidence="3">Belongs to the MESH1 family.</text>
</comment>
<sequence length="179" mass="20390">MSSDAALILEAANFAAEKHKQQRRKDPEKTPYINHPLGVARILSHEGGITDTAVLQAALLHDTVEDTNTTFEEIELHFGQDVRNIVEEVTDDKTLPKMERKRLQMEHAPHCSQKAKLVKLADKLYNLRDLKRCTPEGWSEQRVQEYFQWASEVVKGLRGTNSILEGKLDHMFMDQGIAV</sequence>
<evidence type="ECO:0000250" key="1"/>
<evidence type="ECO:0000255" key="2">
    <source>
        <dbReference type="PROSITE-ProRule" id="PRU01175"/>
    </source>
</evidence>
<evidence type="ECO:0000305" key="3"/>
<accession>Q28C98</accession>
<keyword id="KW-0378">Hydrolase</keyword>
<keyword id="KW-0464">Manganese</keyword>
<keyword id="KW-0479">Metal-binding</keyword>
<keyword id="KW-1185">Reference proteome</keyword>
<gene>
    <name type="primary">hddc3</name>
    <name type="synonym">Mesh1</name>
    <name type="ORF">TGas061b07.1</name>
</gene>
<dbReference type="EC" id="3.1.7.2"/>
<dbReference type="EMBL" id="CR942384">
    <property type="protein sequence ID" value="CAJ81555.1"/>
    <property type="molecule type" value="mRNA"/>
</dbReference>
<dbReference type="RefSeq" id="NP_001039099.1">
    <property type="nucleotide sequence ID" value="NM_001045634.1"/>
</dbReference>
<dbReference type="SMR" id="Q28C98"/>
<dbReference type="FunCoup" id="Q28C98">
    <property type="interactions" value="391"/>
</dbReference>
<dbReference type="STRING" id="8364.ENSXETP00000025551"/>
<dbReference type="PaxDb" id="8364-ENSXETP00000021510"/>
<dbReference type="GeneID" id="733918"/>
<dbReference type="KEGG" id="xtr:733918"/>
<dbReference type="AGR" id="Xenbase:XB-GENE-973216"/>
<dbReference type="CTD" id="374659"/>
<dbReference type="Xenbase" id="XB-GENE-973216">
    <property type="gene designation" value="hddc3"/>
</dbReference>
<dbReference type="eggNOG" id="KOG1157">
    <property type="taxonomic scope" value="Eukaryota"/>
</dbReference>
<dbReference type="HOGENOM" id="CLU_084517_1_0_1"/>
<dbReference type="InParanoid" id="Q28C98"/>
<dbReference type="OMA" id="PPWRERK"/>
<dbReference type="OrthoDB" id="430679at2759"/>
<dbReference type="Proteomes" id="UP000008143">
    <property type="component" value="Chromosome 8"/>
</dbReference>
<dbReference type="Bgee" id="ENSXETG00000009763">
    <property type="expression patterns" value="Expressed in testis and 13 other cell types or tissues"/>
</dbReference>
<dbReference type="GO" id="GO:0008893">
    <property type="term" value="F:guanosine-3',5'-bis(diphosphate) 3'-diphosphatase activity"/>
    <property type="evidence" value="ECO:0007669"/>
    <property type="project" value="UniProtKB-EC"/>
</dbReference>
<dbReference type="GO" id="GO:0046872">
    <property type="term" value="F:metal ion binding"/>
    <property type="evidence" value="ECO:0007669"/>
    <property type="project" value="UniProtKB-KW"/>
</dbReference>
<dbReference type="CDD" id="cd00077">
    <property type="entry name" value="HDc"/>
    <property type="match status" value="1"/>
</dbReference>
<dbReference type="FunFam" id="1.10.3210.10:FF:000012">
    <property type="entry name" value="HD domain containing 3"/>
    <property type="match status" value="1"/>
</dbReference>
<dbReference type="Gene3D" id="1.10.3210.10">
    <property type="entry name" value="Hypothetical protein af1432"/>
    <property type="match status" value="1"/>
</dbReference>
<dbReference type="InterPro" id="IPR003607">
    <property type="entry name" value="HD/PDEase_dom"/>
</dbReference>
<dbReference type="InterPro" id="IPR006674">
    <property type="entry name" value="HD_domain"/>
</dbReference>
<dbReference type="InterPro" id="IPR052194">
    <property type="entry name" value="MESH1"/>
</dbReference>
<dbReference type="PANTHER" id="PTHR46246">
    <property type="entry name" value="GUANOSINE-3',5'-BIS(DIPHOSPHATE) 3'-PYROPHOSPHOHYDROLASE MESH1"/>
    <property type="match status" value="1"/>
</dbReference>
<dbReference type="PANTHER" id="PTHR46246:SF1">
    <property type="entry name" value="GUANOSINE-3',5'-BIS(DIPHOSPHATE) 3'-PYROPHOSPHOHYDROLASE MESH1"/>
    <property type="match status" value="1"/>
</dbReference>
<dbReference type="Pfam" id="PF13328">
    <property type="entry name" value="HD_4"/>
    <property type="match status" value="1"/>
</dbReference>
<dbReference type="SMART" id="SM00471">
    <property type="entry name" value="HDc"/>
    <property type="match status" value="1"/>
</dbReference>
<dbReference type="SUPFAM" id="SSF109604">
    <property type="entry name" value="HD-domain/PDEase-like"/>
    <property type="match status" value="1"/>
</dbReference>
<dbReference type="PROSITE" id="PS51831">
    <property type="entry name" value="HD"/>
    <property type="match status" value="1"/>
</dbReference>
<reference key="1">
    <citation type="submission" date="2006-10" db="EMBL/GenBank/DDBJ databases">
        <authorList>
            <consortium name="Sanger Xenopus tropicalis EST/cDNA project"/>
        </authorList>
    </citation>
    <scope>NUCLEOTIDE SEQUENCE [LARGE SCALE MRNA]</scope>
    <source>
        <tissue>Gastrula</tissue>
    </source>
</reference>
<feature type="chain" id="PRO_0000263113" description="Guanosine-3',5'-bis(diphosphate) 3'-pyrophosphohydrolase MESH1">
    <location>
        <begin position="1"/>
        <end position="179"/>
    </location>
</feature>
<feature type="domain" description="HD" evidence="2">
    <location>
        <begin position="32"/>
        <end position="127"/>
    </location>
</feature>
<feature type="active site" description="Nucleophile" evidence="1">
    <location>
        <position position="65"/>
    </location>
</feature>
<feature type="active site" description="Nucleophile" evidence="1">
    <location>
        <position position="66"/>
    </location>
</feature>
<feature type="binding site" evidence="1">
    <location>
        <position position="35"/>
    </location>
    <ligand>
        <name>Mn(2+)</name>
        <dbReference type="ChEBI" id="CHEBI:29035"/>
    </ligand>
</feature>
<feature type="binding site" evidence="1">
    <location>
        <position position="61"/>
    </location>
    <ligand>
        <name>Mn(2+)</name>
        <dbReference type="ChEBI" id="CHEBI:29035"/>
    </ligand>
</feature>
<feature type="binding site" evidence="1">
    <location>
        <position position="62"/>
    </location>
    <ligand>
        <name>Mn(2+)</name>
        <dbReference type="ChEBI" id="CHEBI:29035"/>
    </ligand>
</feature>
<feature type="binding site" evidence="1">
    <location>
        <position position="122"/>
    </location>
    <ligand>
        <name>Mn(2+)</name>
        <dbReference type="ChEBI" id="CHEBI:29035"/>
    </ligand>
</feature>
<name>MESH1_XENTR</name>
<proteinExistence type="evidence at transcript level"/>
<organism>
    <name type="scientific">Xenopus tropicalis</name>
    <name type="common">Western clawed frog</name>
    <name type="synonym">Silurana tropicalis</name>
    <dbReference type="NCBI Taxonomy" id="8364"/>
    <lineage>
        <taxon>Eukaryota</taxon>
        <taxon>Metazoa</taxon>
        <taxon>Chordata</taxon>
        <taxon>Craniata</taxon>
        <taxon>Vertebrata</taxon>
        <taxon>Euteleostomi</taxon>
        <taxon>Amphibia</taxon>
        <taxon>Batrachia</taxon>
        <taxon>Anura</taxon>
        <taxon>Pipoidea</taxon>
        <taxon>Pipidae</taxon>
        <taxon>Xenopodinae</taxon>
        <taxon>Xenopus</taxon>
        <taxon>Silurana</taxon>
    </lineage>
</organism>
<protein>
    <recommendedName>
        <fullName>Guanosine-3',5'-bis(diphosphate) 3'-pyrophosphohydrolase MESH1</fullName>
        <ecNumber>3.1.7.2</ecNumber>
    </recommendedName>
    <alternativeName>
        <fullName>HD domain-containing protein 3</fullName>
    </alternativeName>
    <alternativeName>
        <fullName>Metazoan SpoT homolog 1</fullName>
        <shortName>MESH1</shortName>
    </alternativeName>
    <alternativeName>
        <fullName>Penta-phosphate guanosine-3'-pyrophosphohydrolase</fullName>
        <shortName>(ppGpp)ase</shortName>
    </alternativeName>
</protein>